<organism>
    <name type="scientific">Mycobacterium tuberculosis (strain CDC 1551 / Oshkosh)</name>
    <dbReference type="NCBI Taxonomy" id="83331"/>
    <lineage>
        <taxon>Bacteria</taxon>
        <taxon>Bacillati</taxon>
        <taxon>Actinomycetota</taxon>
        <taxon>Actinomycetes</taxon>
        <taxon>Mycobacteriales</taxon>
        <taxon>Mycobacteriaceae</taxon>
        <taxon>Mycobacterium</taxon>
        <taxon>Mycobacterium tuberculosis complex</taxon>
    </lineage>
</organism>
<accession>P9WH20</accession>
<accession>L0TFC4</accession>
<accession>O07805</accession>
<accession>Q7D4T6</accession>
<sequence>MQVTSVGHAGFLIQTQAGSILCDPWVNPAYFASWFPFPDNSGLDWGALGECDYLYVSHLHKDHFDAENLRAHVNKDAVVLLPDFPVPDLRNELQKLGFHRFFETTDSVKHRLRGPNGDLDVMIIALRAPADGPIGDSALVVADGETTAFNMNDARPVDLDVLASEFGHIDVHMLQYSGAIWYPMVYDMPARAKDAFGAQKRQRQMDRARQYIAQVGATWVVPSAGPPCFLAPELRHLNDDGSDPANIFPDQMVFLDQMRAHGQDGGLLMIPGSTADFTGTTLNSLRHPLPAEQVEAIFTTDKAAYIADYADRMAPVLAAQKAGWAAAAGEPLLQPLRTLFEPIMLQSNEICDGIGYPVELAIGPETIVLDFPKRAVREPIPDERFRYGFAIAPELVRTVLRDNEPDWVNTIFLSTRFRAWRVGGYNEYLYTFFKCLTDERIAYADGWFAEAHDDSSSITLNGWEIQRRCPHLKADLSKFGVVEGNTLTCNLHGWQWRLDDGRCLTARGHQLRSSRP</sequence>
<gene>
    <name type="ordered locus">MT3926</name>
</gene>
<name>Y3818_MYCTO</name>
<reference key="1">
    <citation type="journal article" date="2002" name="J. Bacteriol.">
        <title>Whole-genome comparison of Mycobacterium tuberculosis clinical and laboratory strains.</title>
        <authorList>
            <person name="Fleischmann R.D."/>
            <person name="Alland D."/>
            <person name="Eisen J.A."/>
            <person name="Carpenter L."/>
            <person name="White O."/>
            <person name="Peterson J.D."/>
            <person name="DeBoy R.T."/>
            <person name="Dodson R.J."/>
            <person name="Gwinn M.L."/>
            <person name="Haft D.H."/>
            <person name="Hickey E.K."/>
            <person name="Kolonay J.F."/>
            <person name="Nelson W.C."/>
            <person name="Umayam L.A."/>
            <person name="Ermolaeva M.D."/>
            <person name="Salzberg S.L."/>
            <person name="Delcher A."/>
            <person name="Utterback T.R."/>
            <person name="Weidman J.F."/>
            <person name="Khouri H.M."/>
            <person name="Gill J."/>
            <person name="Mikula A."/>
            <person name="Bishai W."/>
            <person name="Jacobs W.R. Jr."/>
            <person name="Venter J.C."/>
            <person name="Fraser C.M."/>
        </authorList>
    </citation>
    <scope>NUCLEOTIDE SEQUENCE [LARGE SCALE GENOMIC DNA]</scope>
    <source>
        <strain>CDC 1551 / Oshkosh</strain>
    </source>
</reference>
<keyword id="KW-0001">2Fe-2S</keyword>
<keyword id="KW-0408">Iron</keyword>
<keyword id="KW-0411">Iron-sulfur</keyword>
<keyword id="KW-0479">Metal-binding</keyword>
<keyword id="KW-0560">Oxidoreductase</keyword>
<keyword id="KW-1185">Reference proteome</keyword>
<evidence type="ECO:0000255" key="1">
    <source>
        <dbReference type="PROSITE-ProRule" id="PRU00628"/>
    </source>
</evidence>
<dbReference type="EC" id="1.-.-.-"/>
<dbReference type="EMBL" id="AE000516">
    <property type="protein sequence ID" value="AAK48293.1"/>
    <property type="molecule type" value="Genomic_DNA"/>
</dbReference>
<dbReference type="PIR" id="F70521">
    <property type="entry name" value="F70521"/>
</dbReference>
<dbReference type="RefSeq" id="WP_003420837.1">
    <property type="nucleotide sequence ID" value="NZ_KK341227.1"/>
</dbReference>
<dbReference type="SMR" id="P9WH20"/>
<dbReference type="KEGG" id="mtc:MT3926"/>
<dbReference type="PATRIC" id="fig|83331.31.peg.4223"/>
<dbReference type="HOGENOM" id="CLU_525630_0_0_11"/>
<dbReference type="Proteomes" id="UP000001020">
    <property type="component" value="Chromosome"/>
</dbReference>
<dbReference type="GO" id="GO:0005737">
    <property type="term" value="C:cytoplasm"/>
    <property type="evidence" value="ECO:0007669"/>
    <property type="project" value="TreeGrafter"/>
</dbReference>
<dbReference type="GO" id="GO:0051537">
    <property type="term" value="F:2 iron, 2 sulfur cluster binding"/>
    <property type="evidence" value="ECO:0007669"/>
    <property type="project" value="UniProtKB-KW"/>
</dbReference>
<dbReference type="GO" id="GO:0046872">
    <property type="term" value="F:metal ion binding"/>
    <property type="evidence" value="ECO:0007669"/>
    <property type="project" value="UniProtKB-KW"/>
</dbReference>
<dbReference type="GO" id="GO:0004497">
    <property type="term" value="F:monooxygenase activity"/>
    <property type="evidence" value="ECO:0007669"/>
    <property type="project" value="UniProtKB-ARBA"/>
</dbReference>
<dbReference type="GO" id="GO:0016705">
    <property type="term" value="F:oxidoreductase activity, acting on paired donors, with incorporation or reduction of molecular oxygen"/>
    <property type="evidence" value="ECO:0007669"/>
    <property type="project" value="UniProtKB-ARBA"/>
</dbReference>
<dbReference type="Gene3D" id="3.60.15.10">
    <property type="entry name" value="Ribonuclease Z/Hydroxyacylglutathione hydrolase-like"/>
    <property type="match status" value="1"/>
</dbReference>
<dbReference type="Gene3D" id="2.102.10.10">
    <property type="entry name" value="Rieske [2Fe-2S] iron-sulphur domain"/>
    <property type="match status" value="1"/>
</dbReference>
<dbReference type="InterPro" id="IPR036866">
    <property type="entry name" value="RibonucZ/Hydroxyglut_hydro"/>
</dbReference>
<dbReference type="InterPro" id="IPR017941">
    <property type="entry name" value="Rieske_2Fe-2S"/>
</dbReference>
<dbReference type="InterPro" id="IPR036922">
    <property type="entry name" value="Rieske_2Fe-2S_sf"/>
</dbReference>
<dbReference type="PANTHER" id="PTHR15032">
    <property type="entry name" value="N-ACYL-PHOSPHATIDYLETHANOLAMINE-HYDROLYZING PHOSPHOLIPASE D"/>
    <property type="match status" value="1"/>
</dbReference>
<dbReference type="PANTHER" id="PTHR15032:SF4">
    <property type="entry name" value="N-ACYL-PHOSPHATIDYLETHANOLAMINE-HYDROLYZING PHOSPHOLIPASE D"/>
    <property type="match status" value="1"/>
</dbReference>
<dbReference type="Pfam" id="PF13483">
    <property type="entry name" value="Lactamase_B_3"/>
    <property type="match status" value="1"/>
</dbReference>
<dbReference type="Pfam" id="PF00355">
    <property type="entry name" value="Rieske"/>
    <property type="match status" value="1"/>
</dbReference>
<dbReference type="Pfam" id="PF25451">
    <property type="entry name" value="SCP2_Rv3818"/>
    <property type="match status" value="1"/>
</dbReference>
<dbReference type="SUPFAM" id="SSF50022">
    <property type="entry name" value="ISP domain"/>
    <property type="match status" value="1"/>
</dbReference>
<dbReference type="SUPFAM" id="SSF56281">
    <property type="entry name" value="Metallo-hydrolase/oxidoreductase"/>
    <property type="match status" value="1"/>
</dbReference>
<dbReference type="PROSITE" id="PS51296">
    <property type="entry name" value="RIESKE"/>
    <property type="match status" value="1"/>
</dbReference>
<feature type="chain" id="PRO_0000428263" description="Putative Rieske 2Fe-2S iron-sulfur protein MT3926">
    <location>
        <begin position="1"/>
        <end position="516"/>
    </location>
</feature>
<feature type="domain" description="Rieske" evidence="1">
    <location>
        <begin position="429"/>
        <end position="516"/>
    </location>
</feature>
<feature type="binding site" evidence="1">
    <location>
        <position position="469"/>
    </location>
    <ligand>
        <name>[2Fe-2S] cluster</name>
        <dbReference type="ChEBI" id="CHEBI:190135"/>
    </ligand>
</feature>
<feature type="binding site" evidence="1">
    <location>
        <position position="471"/>
    </location>
    <ligand>
        <name>[2Fe-2S] cluster</name>
        <dbReference type="ChEBI" id="CHEBI:190135"/>
    </ligand>
</feature>
<feature type="binding site" evidence="1">
    <location>
        <position position="489"/>
    </location>
    <ligand>
        <name>[2Fe-2S] cluster</name>
        <dbReference type="ChEBI" id="CHEBI:190135"/>
    </ligand>
</feature>
<feature type="binding site" evidence="1">
    <location>
        <position position="492"/>
    </location>
    <ligand>
        <name>[2Fe-2S] cluster</name>
        <dbReference type="ChEBI" id="CHEBI:190135"/>
    </ligand>
</feature>
<comment type="cofactor">
    <cofactor evidence="1">
        <name>[2Fe-2S] cluster</name>
        <dbReference type="ChEBI" id="CHEBI:190135"/>
    </cofactor>
    <text evidence="1">Binds 1 [2Fe-2S] cluster per subunit.</text>
</comment>
<protein>
    <recommendedName>
        <fullName>Putative Rieske 2Fe-2S iron-sulfur protein MT3926</fullName>
        <ecNumber>1.-.-.-</ecNumber>
    </recommendedName>
</protein>
<proteinExistence type="inferred from homology"/>